<keyword id="KW-0025">Alternative splicing</keyword>
<keyword id="KW-0175">Coiled coil</keyword>
<keyword id="KW-0268">Exocytosis</keyword>
<keyword id="KW-0597">Phosphoprotein</keyword>
<keyword id="KW-1185">Reference proteome</keyword>
<feature type="chain" id="PRO_0000189422" description="Alpha-taxilin">
    <location>
        <begin position="1"/>
        <end position="554"/>
    </location>
</feature>
<feature type="region of interest" description="Disordered" evidence="4">
    <location>
        <begin position="1"/>
        <end position="66"/>
    </location>
</feature>
<feature type="region of interest" description="Disordered" evidence="4">
    <location>
        <begin position="85"/>
        <end position="166"/>
    </location>
</feature>
<feature type="region of interest" description="Disordered" evidence="4">
    <location>
        <begin position="492"/>
        <end position="554"/>
    </location>
</feature>
<feature type="coiled-coil region" evidence="3">
    <location>
        <begin position="186"/>
        <end position="491"/>
    </location>
</feature>
<feature type="compositionally biased region" description="Low complexity" evidence="4">
    <location>
        <begin position="91"/>
        <end position="103"/>
    </location>
</feature>
<feature type="compositionally biased region" description="Basic and acidic residues" evidence="4">
    <location>
        <begin position="143"/>
        <end position="158"/>
    </location>
</feature>
<feature type="modified residue" description="Phosphoserine" evidence="2">
    <location>
        <position position="71"/>
    </location>
</feature>
<feature type="modified residue" description="Phosphoserine" evidence="7">
    <location>
        <position position="515"/>
    </location>
</feature>
<feature type="modified residue" description="Phosphoserine" evidence="7">
    <location>
        <position position="523"/>
    </location>
</feature>
<feature type="splice variant" id="VSP_011833" description="In isoform 2." evidence="5">
    <original>LLKEAVESQRMCELMKQQETHLKQQLALYTEKFEEFQNTLSKSSEVFT</original>
    <variation>VRLRPQGCGGAGRKWAGFWLSSIYFLWMGEILPAQSSNCLSRQQSESR</variation>
    <location>
        <begin position="362"/>
        <end position="409"/>
    </location>
</feature>
<feature type="splice variant" id="VSP_011834" description="In isoform 2." evidence="5">
    <location>
        <begin position="410"/>
        <end position="554"/>
    </location>
</feature>
<evidence type="ECO:0000250" key="1"/>
<evidence type="ECO:0000250" key="2">
    <source>
        <dbReference type="UniProtKB" id="P40222"/>
    </source>
</evidence>
<evidence type="ECO:0000255" key="3"/>
<evidence type="ECO:0000256" key="4">
    <source>
        <dbReference type="SAM" id="MobiDB-lite"/>
    </source>
</evidence>
<evidence type="ECO:0000303" key="5">
    <source>
    </source>
</evidence>
<evidence type="ECO:0000305" key="6"/>
<evidence type="ECO:0007744" key="7">
    <source>
    </source>
</evidence>
<protein>
    <recommendedName>
        <fullName>Alpha-taxilin</fullName>
    </recommendedName>
</protein>
<dbReference type="EMBL" id="BC060227">
    <property type="protein sequence ID" value="AAH60227.1"/>
    <property type="molecule type" value="mRNA"/>
</dbReference>
<dbReference type="EMBL" id="BC065115">
    <property type="protein sequence ID" value="AAH65115.1"/>
    <property type="molecule type" value="mRNA"/>
</dbReference>
<dbReference type="CCDS" id="CCDS38887.1">
    <molecule id="Q6PAM1-1"/>
</dbReference>
<dbReference type="RefSeq" id="NP_001005506.2">
    <molecule id="Q6PAM1-1"/>
    <property type="nucleotide sequence ID" value="NM_001005506.3"/>
</dbReference>
<dbReference type="RefSeq" id="NP_001186624.1">
    <molecule id="Q6PAM1-1"/>
    <property type="nucleotide sequence ID" value="NM_001199695.1"/>
</dbReference>
<dbReference type="RefSeq" id="XP_006502722.1">
    <molecule id="Q6PAM1-1"/>
    <property type="nucleotide sequence ID" value="XM_006502659.5"/>
</dbReference>
<dbReference type="SMR" id="Q6PAM1"/>
<dbReference type="BioGRID" id="224938">
    <property type="interactions" value="3"/>
</dbReference>
<dbReference type="FunCoup" id="Q6PAM1">
    <property type="interactions" value="2683"/>
</dbReference>
<dbReference type="IntAct" id="Q6PAM1">
    <property type="interactions" value="1"/>
</dbReference>
<dbReference type="STRING" id="10090.ENSMUSP00000081285"/>
<dbReference type="GlyGen" id="Q6PAM1">
    <property type="glycosylation" value="2 sites, 1 O-linked glycan (1 site)"/>
</dbReference>
<dbReference type="iPTMnet" id="Q6PAM1"/>
<dbReference type="PhosphoSitePlus" id="Q6PAM1"/>
<dbReference type="jPOST" id="Q6PAM1"/>
<dbReference type="PaxDb" id="10090-ENSMUSP00000081285"/>
<dbReference type="PeptideAtlas" id="Q6PAM1"/>
<dbReference type="ProteomicsDB" id="298071">
    <molecule id="Q6PAM1-1"/>
</dbReference>
<dbReference type="ProteomicsDB" id="298072">
    <molecule id="Q6PAM1-2"/>
</dbReference>
<dbReference type="Pumba" id="Q6PAM1"/>
<dbReference type="Antibodypedia" id="31239">
    <property type="antibodies" value="160 antibodies from 30 providers"/>
</dbReference>
<dbReference type="Ensembl" id="ENSMUST00000046425.16">
    <molecule id="Q6PAM1-1"/>
    <property type="protein sequence ID" value="ENSMUSP00000042153.10"/>
    <property type="gene ID" value="ENSMUSG00000053841.16"/>
</dbReference>
<dbReference type="Ensembl" id="ENSMUST00000084264.12">
    <molecule id="Q6PAM1-1"/>
    <property type="protein sequence ID" value="ENSMUSP00000081285.6"/>
    <property type="gene ID" value="ENSMUSG00000053841.16"/>
</dbReference>
<dbReference type="GeneID" id="109658"/>
<dbReference type="KEGG" id="mmu:109658"/>
<dbReference type="UCSC" id="uc008uxx.2">
    <molecule id="Q6PAM1-1"/>
    <property type="organism name" value="mouse"/>
</dbReference>
<dbReference type="AGR" id="MGI:105968"/>
<dbReference type="CTD" id="200081"/>
<dbReference type="MGI" id="MGI:105968">
    <property type="gene designation" value="Txlna"/>
</dbReference>
<dbReference type="VEuPathDB" id="HostDB:ENSMUSG00000053841"/>
<dbReference type="eggNOG" id="KOG1850">
    <property type="taxonomic scope" value="Eukaryota"/>
</dbReference>
<dbReference type="GeneTree" id="ENSGT00940000158303"/>
<dbReference type="HOGENOM" id="CLU_025501_3_0_1"/>
<dbReference type="InParanoid" id="Q6PAM1"/>
<dbReference type="OMA" id="VTEAPCC"/>
<dbReference type="OrthoDB" id="425555at2759"/>
<dbReference type="PhylomeDB" id="Q6PAM1"/>
<dbReference type="TreeFam" id="TF318595"/>
<dbReference type="Reactome" id="R-MMU-449836">
    <property type="pathway name" value="Other interleukin signaling"/>
</dbReference>
<dbReference type="BioGRID-ORCS" id="109658">
    <property type="hits" value="4 hits in 77 CRISPR screens"/>
</dbReference>
<dbReference type="ChiTaRS" id="Txlna">
    <property type="organism name" value="mouse"/>
</dbReference>
<dbReference type="PRO" id="PR:Q6PAM1"/>
<dbReference type="Proteomes" id="UP000000589">
    <property type="component" value="Chromosome 4"/>
</dbReference>
<dbReference type="RNAct" id="Q6PAM1">
    <property type="molecule type" value="protein"/>
</dbReference>
<dbReference type="Bgee" id="ENSMUSG00000053841">
    <property type="expression patterns" value="Expressed in manus and 232 other cell types or tissues"/>
</dbReference>
<dbReference type="ExpressionAtlas" id="Q6PAM1">
    <property type="expression patterns" value="baseline and differential"/>
</dbReference>
<dbReference type="GO" id="GO:0005737">
    <property type="term" value="C:cytoplasm"/>
    <property type="evidence" value="ECO:0007669"/>
    <property type="project" value="Ensembl"/>
</dbReference>
<dbReference type="GO" id="GO:0019905">
    <property type="term" value="F:syntaxin binding"/>
    <property type="evidence" value="ECO:0007669"/>
    <property type="project" value="InterPro"/>
</dbReference>
<dbReference type="GO" id="GO:0042113">
    <property type="term" value="P:B cell activation"/>
    <property type="evidence" value="ECO:0000314"/>
    <property type="project" value="MGI"/>
</dbReference>
<dbReference type="GO" id="GO:0006887">
    <property type="term" value="P:exocytosis"/>
    <property type="evidence" value="ECO:0007669"/>
    <property type="project" value="UniProtKB-KW"/>
</dbReference>
<dbReference type="InterPro" id="IPR026183">
    <property type="entry name" value="Taxilin_fam"/>
</dbReference>
<dbReference type="PANTHER" id="PTHR16127:SF12">
    <property type="entry name" value="ALPHA-TAXILIN"/>
    <property type="match status" value="1"/>
</dbReference>
<dbReference type="PANTHER" id="PTHR16127">
    <property type="entry name" value="TAXILIN"/>
    <property type="match status" value="1"/>
</dbReference>
<dbReference type="Pfam" id="PF09728">
    <property type="entry name" value="Taxilin"/>
    <property type="match status" value="1"/>
</dbReference>
<reference key="1">
    <citation type="journal article" date="2004" name="Genome Res.">
        <title>The status, quality, and expansion of the NIH full-length cDNA project: the Mammalian Gene Collection (MGC).</title>
        <authorList>
            <consortium name="The MGC Project Team"/>
        </authorList>
    </citation>
    <scope>NUCLEOTIDE SEQUENCE [LARGE SCALE MRNA] (ISOFORMS 1 AND 2)</scope>
    <source>
        <strain>C57BL/6J</strain>
        <tissue>Brain</tissue>
    </source>
</reference>
<reference key="2">
    <citation type="journal article" date="2010" name="Cell">
        <title>A tissue-specific atlas of mouse protein phosphorylation and expression.</title>
        <authorList>
            <person name="Huttlin E.L."/>
            <person name="Jedrychowski M.P."/>
            <person name="Elias J.E."/>
            <person name="Goswami T."/>
            <person name="Rad R."/>
            <person name="Beausoleil S.A."/>
            <person name="Villen J."/>
            <person name="Haas W."/>
            <person name="Sowa M.E."/>
            <person name="Gygi S.P."/>
        </authorList>
    </citation>
    <scope>PHOSPHORYLATION [LARGE SCALE ANALYSIS] AT SER-515 AND SER-523</scope>
    <scope>IDENTIFICATION BY MASS SPECTROMETRY [LARGE SCALE ANALYSIS]</scope>
    <source>
        <tissue>Brain</tissue>
        <tissue>Brown adipose tissue</tissue>
        <tissue>Liver</tissue>
        <tissue>Lung</tissue>
        <tissue>Pancreas</tissue>
        <tissue>Spleen</tissue>
        <tissue>Testis</tissue>
    </source>
</reference>
<comment type="function">
    <text evidence="1">May be involved in intracellular vesicle traffic and potentially in calcium-dependent exocytosis in neuroendocrine cells.</text>
</comment>
<comment type="subunit">
    <text evidence="1">Binds to the C-terminal coiled coil region of syntaxin family members STX1A, STX3A and STX4A, but not when these proteins are complexed with SNAP25, VAMP2 or STXBP1, suggesting that it interacts with syntaxins that do not form the SNARE complex.</text>
</comment>
<comment type="alternative products">
    <event type="alternative splicing"/>
    <isoform>
        <id>Q6PAM1-1</id>
        <name>1</name>
        <sequence type="displayed"/>
    </isoform>
    <isoform>
        <id>Q6PAM1-2</id>
        <name>2</name>
        <sequence type="described" ref="VSP_011833 VSP_011834"/>
    </isoform>
</comment>
<comment type="similarity">
    <text evidence="6">Belongs to the taxilin family.</text>
</comment>
<gene>
    <name type="primary">Txlna</name>
    <name type="synonym">Txln</name>
</gene>
<proteinExistence type="evidence at protein level"/>
<accession>Q6PAM1</accession>
<accession>Q6P1E5</accession>
<sequence>MKNQDKKNGPAKHSNSKGSPGQREAGPEGAHGRPRQTAPGAEAEGSTSQAPGKTEGARAKAAQPGALCDVSEELSRQLEDILSTYCVDNNQGGPAEEGAQGEPTEPEDTEKSRTYAARNGEPEPGIPVVNGEKETSKGEPGTEEIRASDEVGDRDHRRPQEKKKAKGLGKEITLLMQTLNTLSTPEEKLAALCKKYAELLEEHRNSQKQMKLLQKKQSQLVQEKDHLRGEHSKAVLARSKLESLCRELQRHNRSLKEEGVQRAREEEEKRKEVTSHFQVTLNDIQLQMEQHNERNSKLRQENMELAERLKKLIEQYELREEHIDKVFKHKDLQQQLVDAKLQQAQEMLKEAEERHQREKEFLLKEAVESQRMCELMKQQETHLKQQLALYTEKFEEFQNTLSKSSEVFTTFKQEMEKMTKKIKKLEKETTMYRSRWESSNKALLEMAEEKTVRDKELEGLQVKIQRLEKLCRALQTERNDLNKRVQDLTAGGITDIGSERRPEATTASKEQGVESPGAQPASSPRATDAPCCSGAPSTGTAGQTGPGEPTPATA</sequence>
<name>TXLNA_MOUSE</name>
<organism>
    <name type="scientific">Mus musculus</name>
    <name type="common">Mouse</name>
    <dbReference type="NCBI Taxonomy" id="10090"/>
    <lineage>
        <taxon>Eukaryota</taxon>
        <taxon>Metazoa</taxon>
        <taxon>Chordata</taxon>
        <taxon>Craniata</taxon>
        <taxon>Vertebrata</taxon>
        <taxon>Euteleostomi</taxon>
        <taxon>Mammalia</taxon>
        <taxon>Eutheria</taxon>
        <taxon>Euarchontoglires</taxon>
        <taxon>Glires</taxon>
        <taxon>Rodentia</taxon>
        <taxon>Myomorpha</taxon>
        <taxon>Muroidea</taxon>
        <taxon>Muridae</taxon>
        <taxon>Murinae</taxon>
        <taxon>Mus</taxon>
        <taxon>Mus</taxon>
    </lineage>
</organism>